<accession>Q5R678</accession>
<accession>Q5RCV6</accession>
<protein>
    <recommendedName>
        <fullName evidence="2">Isocitrate dehydrogenase [NAD] subunit alpha, mitochondrial</fullName>
        <ecNumber evidence="2">1.1.1.41</ecNumber>
    </recommendedName>
    <alternativeName>
        <fullName>Isocitric dehydrogenase subunit alpha</fullName>
    </alternativeName>
    <alternativeName>
        <fullName>NAD(+)-specific ICDH subunit alpha</fullName>
    </alternativeName>
</protein>
<feature type="transit peptide" description="Mitochondrion" evidence="2">
    <location>
        <begin position="1"/>
        <end position="27"/>
    </location>
</feature>
<feature type="chain" id="PRO_0000014439" description="Isocitrate dehydrogenase [NAD] subunit alpha, mitochondrial">
    <location>
        <begin position="28"/>
        <end position="366"/>
    </location>
</feature>
<feature type="binding site" evidence="2">
    <location>
        <position position="115"/>
    </location>
    <ligand>
        <name>substrate</name>
    </ligand>
</feature>
<feature type="binding site" evidence="2">
    <location>
        <position position="125"/>
    </location>
    <ligand>
        <name>substrate</name>
    </ligand>
</feature>
<feature type="binding site" evidence="2">
    <location>
        <position position="146"/>
    </location>
    <ligand>
        <name>substrate</name>
    </ligand>
</feature>
<feature type="binding site" evidence="2">
    <location>
        <position position="233"/>
    </location>
    <ligand>
        <name>Mg(2+)</name>
        <dbReference type="ChEBI" id="CHEBI:18420"/>
    </ligand>
</feature>
<feature type="binding site" evidence="2">
    <location>
        <position position="257"/>
    </location>
    <ligand>
        <name>Mg(2+)</name>
        <dbReference type="ChEBI" id="CHEBI:18420"/>
    </ligand>
</feature>
<feature type="binding site" evidence="2">
    <location>
        <position position="261"/>
    </location>
    <ligand>
        <name>Mg(2+)</name>
        <dbReference type="ChEBI" id="CHEBI:18420"/>
    </ligand>
</feature>
<feature type="site" description="Critical for catalysis" evidence="2">
    <location>
        <position position="153"/>
    </location>
</feature>
<feature type="site" description="Critical for catalysis" evidence="2">
    <location>
        <position position="200"/>
    </location>
</feature>
<feature type="modified residue" description="N6-succinyllysine" evidence="3">
    <location>
        <position position="77"/>
    </location>
</feature>
<feature type="modified residue" description="Phosphothreonine" evidence="3">
    <location>
        <position position="101"/>
    </location>
</feature>
<feature type="modified residue" description="N6-acetyllysine" evidence="3">
    <location>
        <position position="223"/>
    </location>
</feature>
<feature type="modified residue" description="N6-acetyllysine; alternate" evidence="2">
    <location>
        <position position="343"/>
    </location>
</feature>
<feature type="modified residue" description="N6-succinyllysine; alternate" evidence="3">
    <location>
        <position position="343"/>
    </location>
</feature>
<feature type="modified residue" description="N6-succinyllysine" evidence="3">
    <location>
        <position position="350"/>
    </location>
</feature>
<feature type="splice variant" id="VSP_014518" description="In isoform 2." evidence="4">
    <location>
        <begin position="1"/>
        <end position="50"/>
    </location>
</feature>
<gene>
    <name evidence="2" type="primary">IDH3A</name>
</gene>
<organism>
    <name type="scientific">Pongo abelii</name>
    <name type="common">Sumatran orangutan</name>
    <name type="synonym">Pongo pygmaeus abelii</name>
    <dbReference type="NCBI Taxonomy" id="9601"/>
    <lineage>
        <taxon>Eukaryota</taxon>
        <taxon>Metazoa</taxon>
        <taxon>Chordata</taxon>
        <taxon>Craniata</taxon>
        <taxon>Vertebrata</taxon>
        <taxon>Euteleostomi</taxon>
        <taxon>Mammalia</taxon>
        <taxon>Eutheria</taxon>
        <taxon>Euarchontoglires</taxon>
        <taxon>Primates</taxon>
        <taxon>Haplorrhini</taxon>
        <taxon>Catarrhini</taxon>
        <taxon>Hominidae</taxon>
        <taxon>Pongo</taxon>
    </lineage>
</organism>
<reference key="1">
    <citation type="submission" date="2004-11" db="EMBL/GenBank/DDBJ databases">
        <authorList>
            <consortium name="The German cDNA consortium"/>
        </authorList>
    </citation>
    <scope>NUCLEOTIDE SEQUENCE [LARGE SCALE MRNA] (ISOFORMS 1 AND 2)</scope>
    <source>
        <tissue>Brain cortex</tissue>
    </source>
</reference>
<evidence type="ECO:0000250" key="1"/>
<evidence type="ECO:0000250" key="2">
    <source>
        <dbReference type="UniProtKB" id="P50213"/>
    </source>
</evidence>
<evidence type="ECO:0000250" key="3">
    <source>
        <dbReference type="UniProtKB" id="Q9D6R2"/>
    </source>
</evidence>
<evidence type="ECO:0000303" key="4">
    <source ref="1"/>
</evidence>
<evidence type="ECO:0000305" key="5"/>
<dbReference type="EC" id="1.1.1.41" evidence="2"/>
<dbReference type="EMBL" id="CR858162">
    <property type="protein sequence ID" value="CAH90401.1"/>
    <property type="molecule type" value="mRNA"/>
</dbReference>
<dbReference type="EMBL" id="CR860617">
    <property type="protein sequence ID" value="CAH92738.1"/>
    <property type="molecule type" value="mRNA"/>
</dbReference>
<dbReference type="RefSeq" id="NP_001125198.1">
    <molecule id="Q5R678-2"/>
    <property type="nucleotide sequence ID" value="NM_001131726.2"/>
</dbReference>
<dbReference type="RefSeq" id="XP_009248340.1">
    <molecule id="Q5R678-1"/>
    <property type="nucleotide sequence ID" value="XM_009250065.4"/>
</dbReference>
<dbReference type="SMR" id="Q5R678"/>
<dbReference type="FunCoup" id="Q5R678">
    <property type="interactions" value="1910"/>
</dbReference>
<dbReference type="STRING" id="9601.ENSPPYP00000007593"/>
<dbReference type="Ensembl" id="ENSPPYT00000007902.3">
    <molecule id="Q5R678-1"/>
    <property type="protein sequence ID" value="ENSPPYP00000007593.2"/>
    <property type="gene ID" value="ENSPPYG00000006690.3"/>
</dbReference>
<dbReference type="GeneID" id="100172089"/>
<dbReference type="KEGG" id="pon:100172089"/>
<dbReference type="CTD" id="3419"/>
<dbReference type="eggNOG" id="KOG0785">
    <property type="taxonomic scope" value="Eukaryota"/>
</dbReference>
<dbReference type="GeneTree" id="ENSGT00950000182989"/>
<dbReference type="HOGENOM" id="CLU_031953_0_1_1"/>
<dbReference type="InParanoid" id="Q5R678"/>
<dbReference type="OMA" id="VRPCRYY"/>
<dbReference type="OrthoDB" id="10261637at2759"/>
<dbReference type="TreeFam" id="TF105692"/>
<dbReference type="Proteomes" id="UP000001595">
    <property type="component" value="Chromosome 15"/>
</dbReference>
<dbReference type="GO" id="GO:0005739">
    <property type="term" value="C:mitochondrion"/>
    <property type="evidence" value="ECO:0007669"/>
    <property type="project" value="UniProtKB-SubCell"/>
</dbReference>
<dbReference type="GO" id="GO:0004449">
    <property type="term" value="F:isocitrate dehydrogenase (NAD+) activity"/>
    <property type="evidence" value="ECO:0000250"/>
    <property type="project" value="UniProtKB"/>
</dbReference>
<dbReference type="GO" id="GO:0000287">
    <property type="term" value="F:magnesium ion binding"/>
    <property type="evidence" value="ECO:0000250"/>
    <property type="project" value="UniProtKB"/>
</dbReference>
<dbReference type="GO" id="GO:0051287">
    <property type="term" value="F:NAD binding"/>
    <property type="evidence" value="ECO:0007669"/>
    <property type="project" value="InterPro"/>
</dbReference>
<dbReference type="GO" id="GO:0006102">
    <property type="term" value="P:isocitrate metabolic process"/>
    <property type="evidence" value="ECO:0007669"/>
    <property type="project" value="TreeGrafter"/>
</dbReference>
<dbReference type="GO" id="GO:0006099">
    <property type="term" value="P:tricarboxylic acid cycle"/>
    <property type="evidence" value="ECO:0007669"/>
    <property type="project" value="UniProtKB-KW"/>
</dbReference>
<dbReference type="FunFam" id="3.40.718.10:FF:000003">
    <property type="entry name" value="Isocitrate dehydrogenase [NAD] subunit, mitochondrial"/>
    <property type="match status" value="1"/>
</dbReference>
<dbReference type="Gene3D" id="3.40.718.10">
    <property type="entry name" value="Isopropylmalate Dehydrogenase"/>
    <property type="match status" value="1"/>
</dbReference>
<dbReference type="InterPro" id="IPR019818">
    <property type="entry name" value="IsoCit/isopropylmalate_DH_CS"/>
</dbReference>
<dbReference type="InterPro" id="IPR004434">
    <property type="entry name" value="Isocitrate_DH_NAD"/>
</dbReference>
<dbReference type="InterPro" id="IPR024084">
    <property type="entry name" value="IsoPropMal-DH-like_dom"/>
</dbReference>
<dbReference type="NCBIfam" id="TIGR00175">
    <property type="entry name" value="mito_nad_idh"/>
    <property type="match status" value="1"/>
</dbReference>
<dbReference type="PANTHER" id="PTHR11835">
    <property type="entry name" value="DECARBOXYLATING DEHYDROGENASES-ISOCITRATE, ISOPROPYLMALATE, TARTRATE"/>
    <property type="match status" value="1"/>
</dbReference>
<dbReference type="PANTHER" id="PTHR11835:SF34">
    <property type="entry name" value="ISOCITRATE DEHYDROGENASE [NAD] SUBUNIT ALPHA, MITOCHONDRIAL"/>
    <property type="match status" value="1"/>
</dbReference>
<dbReference type="Pfam" id="PF00180">
    <property type="entry name" value="Iso_dh"/>
    <property type="match status" value="1"/>
</dbReference>
<dbReference type="SMART" id="SM01329">
    <property type="entry name" value="Iso_dh"/>
    <property type="match status" value="1"/>
</dbReference>
<dbReference type="SUPFAM" id="SSF53659">
    <property type="entry name" value="Isocitrate/Isopropylmalate dehydrogenase-like"/>
    <property type="match status" value="1"/>
</dbReference>
<dbReference type="PROSITE" id="PS00470">
    <property type="entry name" value="IDH_IMDH"/>
    <property type="match status" value="1"/>
</dbReference>
<keyword id="KW-0007">Acetylation</keyword>
<keyword id="KW-0025">Alternative splicing</keyword>
<keyword id="KW-0460">Magnesium</keyword>
<keyword id="KW-0464">Manganese</keyword>
<keyword id="KW-0479">Metal-binding</keyword>
<keyword id="KW-0496">Mitochondrion</keyword>
<keyword id="KW-0520">NAD</keyword>
<keyword id="KW-0560">Oxidoreductase</keyword>
<keyword id="KW-0597">Phosphoprotein</keyword>
<keyword id="KW-1185">Reference proteome</keyword>
<keyword id="KW-0809">Transit peptide</keyword>
<keyword id="KW-0816">Tricarboxylic acid cycle</keyword>
<name>IDH3A_PONAB</name>
<sequence length="366" mass="39619">MAGPAWISKVSRLLGAFHNPKQVTRGFTGGVQTVTLIPGDGIGPEISAAVMKIFDAAKAPIQWEERNVTAIQGPGGKWMIPSEAKESMDKNKMGLKGPLKTPIAAGHPSMNLLLRKTFDLYANVRPCVSIEGYKTPYTDVNIVTIRENTEGEYSGIEHVIVDGVVQSIKLITEGASKRIAEFAFEYARNNHRSNVTAVHKANIMRMSDGLFLQKCREVAENCKDIKFNEMYLDTVCLNMVQDPSQFDVLVMPNLYGDILSDLCAGLIGGLGVTPSGNIGANGVAIFESVHGTAPDIAGKDMANPTALLLSAVMMLRHMGLFDHAARIEAACFATIKDGKSLTKDLGGNAKCSDFTEEICRRVKDLD</sequence>
<proteinExistence type="evidence at transcript level"/>
<comment type="function">
    <text evidence="2">Catalytic subunit of the enzyme which catalyzes the decarboxylation of isocitrate (ICT) into alpha-ketoglutarate. The heterodimer composed of the alpha (IDH3A) and beta (IDH3B) subunits and the heterodimer composed of the alpha (IDH3A) and gamma (IDH3G) subunits, have considerable basal activity but the full activity of the heterotetramer (containing two subunits of IDH3A, one of IDH3B and one of IDH3G) requires the assembly and cooperative function of both heterodimers.</text>
</comment>
<comment type="catalytic activity">
    <reaction evidence="2">
        <text>D-threo-isocitrate + NAD(+) = 2-oxoglutarate + CO2 + NADH</text>
        <dbReference type="Rhea" id="RHEA:23632"/>
        <dbReference type="ChEBI" id="CHEBI:15562"/>
        <dbReference type="ChEBI" id="CHEBI:16526"/>
        <dbReference type="ChEBI" id="CHEBI:16810"/>
        <dbReference type="ChEBI" id="CHEBI:57540"/>
        <dbReference type="ChEBI" id="CHEBI:57945"/>
        <dbReference type="EC" id="1.1.1.41"/>
    </reaction>
    <physiologicalReaction direction="left-to-right" evidence="2">
        <dbReference type="Rhea" id="RHEA:23633"/>
    </physiologicalReaction>
</comment>
<comment type="cofactor">
    <cofactor evidence="2">
        <name>Mg(2+)</name>
        <dbReference type="ChEBI" id="CHEBI:18420"/>
    </cofactor>
    <cofactor evidence="2">
        <name>Mn(2+)</name>
        <dbReference type="ChEBI" id="CHEBI:29035"/>
    </cofactor>
    <text evidence="2">Divalent metal cations; Mn(2+) or Mg(2+). Activity higher in presence of Mn(2+) than of Mg(2+). Binds 1 Mg(2+) or Mn(2+) ion per subunit.</text>
</comment>
<comment type="activity regulation">
    <text evidence="2">The heterotetramer and the heterodimer composed of IDH3A and IDH3G subunits can be allosterically activated by citrate (CIT) or/and ADP, and the two activators can act independently or synergistically. The heterodimer composed of IDH3A and IDH3B subunits cannot be allosterically regulated and the allosteric regulation of the heterotetramer is through the IDH3G subunit and not the IDH3B subunit. The IDH3G subunit contains the allosteric site which consists of a CIT-binding site and an ADP-binding site, and the binding of CIT and ADP causes conformational changes at the allosteric site which are transmitted to the active site in the catalytic subunit (IDH3A) through a cascade of conformational changes at the heterodimer interface, leading to stabilization of the isocitrate-binding at the active site and thus activation of the enzyme. ATP can activate the heterotetramer and the heterodimer composed of IDH3A and IDH3G subunits at low concentrations but inhibits their activities at high concentrations, whereas ATP exhibits only inhibitory effect on the heterodimer composed of IDH3A and IDH3B subunits.</text>
</comment>
<comment type="subunit">
    <text evidence="2">Heterooligomer of subunits alpha (IDH3A), beta (IDH3B), and gamma (IDH3G) in the apparent ratio of 2:1:1. The heterodimer containing one IDH3A and one IDH3B subunit and the heterodimer containing one IDH3A and one IDH3G subunit assemble into a heterotetramer (which contains two subunits of IDH3A, one of IDH3B and one of IDH3G) and further into the heterooctamer.</text>
</comment>
<comment type="subcellular location">
    <subcellularLocation>
        <location evidence="1">Mitochondrion</location>
    </subcellularLocation>
</comment>
<comment type="alternative products">
    <event type="alternative splicing"/>
    <isoform>
        <id>Q5R678-1</id>
        <name>1</name>
        <sequence type="displayed"/>
    </isoform>
    <isoform>
        <id>Q5R678-2</id>
        <name>2</name>
        <sequence type="described" ref="VSP_014518"/>
    </isoform>
</comment>
<comment type="similarity">
    <text evidence="5">Belongs to the isocitrate and isopropylmalate dehydrogenases family.</text>
</comment>